<proteinExistence type="inferred from homology"/>
<comment type="function">
    <text evidence="1">Present in the aqueous fluid surrounding olfactory sensory dendrites and are thought to aid in the capture and transport of hydrophobic odorants into and through this fluid.</text>
</comment>
<comment type="subcellular location">
    <subcellularLocation>
        <location evidence="1">Secreted</location>
    </subcellularLocation>
</comment>
<comment type="similarity">
    <text evidence="2">Belongs to the PBP/GOBP family.</text>
</comment>
<protein>
    <recommendedName>
        <fullName>General odorant-binding protein 72</fullName>
    </recommendedName>
</protein>
<reference key="1">
    <citation type="journal article" date="2002" name="Science">
        <title>The genome sequence of the malaria mosquito Anopheles gambiae.</title>
        <authorList>
            <person name="Holt R.A."/>
            <person name="Subramanian G.M."/>
            <person name="Halpern A."/>
            <person name="Sutton G.G."/>
            <person name="Charlab R."/>
            <person name="Nusskern D.R."/>
            <person name="Wincker P."/>
            <person name="Clark A.G."/>
            <person name="Ribeiro J.M.C."/>
            <person name="Wides R."/>
            <person name="Salzberg S.L."/>
            <person name="Loftus B.J."/>
            <person name="Yandell M.D."/>
            <person name="Majoros W.H."/>
            <person name="Rusch D.B."/>
            <person name="Lai Z."/>
            <person name="Kraft C.L."/>
            <person name="Abril J.F."/>
            <person name="Anthouard V."/>
            <person name="Arensburger P."/>
            <person name="Atkinson P.W."/>
            <person name="Baden H."/>
            <person name="de Berardinis V."/>
            <person name="Baldwin D."/>
            <person name="Benes V."/>
            <person name="Biedler J."/>
            <person name="Blass C."/>
            <person name="Bolanos R."/>
            <person name="Boscus D."/>
            <person name="Barnstead M."/>
            <person name="Cai S."/>
            <person name="Center A."/>
            <person name="Chaturverdi K."/>
            <person name="Christophides G.K."/>
            <person name="Chrystal M.A.M."/>
            <person name="Clamp M."/>
            <person name="Cravchik A."/>
            <person name="Curwen V."/>
            <person name="Dana A."/>
            <person name="Delcher A."/>
            <person name="Dew I."/>
            <person name="Evans C.A."/>
            <person name="Flanigan M."/>
            <person name="Grundschober-Freimoser A."/>
            <person name="Friedli L."/>
            <person name="Gu Z."/>
            <person name="Guan P."/>
            <person name="Guigo R."/>
            <person name="Hillenmeyer M.E."/>
            <person name="Hladun S.L."/>
            <person name="Hogan J.R."/>
            <person name="Hong Y.S."/>
            <person name="Hoover J."/>
            <person name="Jaillon O."/>
            <person name="Ke Z."/>
            <person name="Kodira C.D."/>
            <person name="Kokoza E."/>
            <person name="Koutsos A."/>
            <person name="Letunic I."/>
            <person name="Levitsky A.A."/>
            <person name="Liang Y."/>
            <person name="Lin J.-J."/>
            <person name="Lobo N.F."/>
            <person name="Lopez J.R."/>
            <person name="Malek J.A."/>
            <person name="McIntosh T.C."/>
            <person name="Meister S."/>
            <person name="Miller J.R."/>
            <person name="Mobarry C."/>
            <person name="Mongin E."/>
            <person name="Murphy S.D."/>
            <person name="O'Brochta D.A."/>
            <person name="Pfannkoch C."/>
            <person name="Qi R."/>
            <person name="Regier M.A."/>
            <person name="Remington K."/>
            <person name="Shao H."/>
            <person name="Sharakhova M.V."/>
            <person name="Sitter C.D."/>
            <person name="Shetty J."/>
            <person name="Smith T.J."/>
            <person name="Strong R."/>
            <person name="Sun J."/>
            <person name="Thomasova D."/>
            <person name="Ton L.Q."/>
            <person name="Topalis P."/>
            <person name="Tu Z.J."/>
            <person name="Unger M.F."/>
            <person name="Walenz B."/>
            <person name="Wang A.H."/>
            <person name="Wang J."/>
            <person name="Wang M."/>
            <person name="Wang X."/>
            <person name="Woodford K.J."/>
            <person name="Wortman J.R."/>
            <person name="Wu M."/>
            <person name="Yao A."/>
            <person name="Zdobnov E.M."/>
            <person name="Zhang H."/>
            <person name="Zhao Q."/>
            <person name="Zhao S."/>
            <person name="Zhu S.C."/>
            <person name="Zhimulev I."/>
            <person name="Coluzzi M."/>
            <person name="della Torre A."/>
            <person name="Roth C.W."/>
            <person name="Louis C."/>
            <person name="Kalush F."/>
            <person name="Mural R.J."/>
            <person name="Myers E.W."/>
            <person name="Adams M.D."/>
            <person name="Smith H.O."/>
            <person name="Broder S."/>
            <person name="Gardner M.J."/>
            <person name="Fraser C.M."/>
            <person name="Birney E."/>
            <person name="Bork P."/>
            <person name="Brey P.T."/>
            <person name="Venter J.C."/>
            <person name="Weissenbach J."/>
            <person name="Kafatos F.C."/>
            <person name="Collins F.H."/>
            <person name="Hoffman S.L."/>
        </authorList>
    </citation>
    <scope>NUCLEOTIDE SEQUENCE [LARGE SCALE GENOMIC DNA]</scope>
    <source>
        <strain>PEST</strain>
    </source>
</reference>
<reference key="2">
    <citation type="journal article" date="2013" name="Genome Biol. Evol.">
        <title>Comparative genomics of odorant binding proteins in Anopheles gambiae, Aedes aegypti, and Culex quinquefasciatus.</title>
        <authorList>
            <person name="Manoharan M."/>
            <person name="Ng Fuk Chong M."/>
            <person name="Vaitinadapoule A."/>
            <person name="Frumence E."/>
            <person name="Sowdhamini R."/>
            <person name="Offmann B."/>
        </authorList>
    </citation>
    <scope>IDENTIFICATION</scope>
</reference>
<gene>
    <name type="primary">Obp72</name>
    <name type="ORF">AGAP012714</name>
</gene>
<keyword id="KW-1015">Disulfide bond</keyword>
<keyword id="KW-0552">Olfaction</keyword>
<keyword id="KW-1185">Reference proteome</keyword>
<keyword id="KW-0964">Secreted</keyword>
<keyword id="KW-0716">Sensory transduction</keyword>
<keyword id="KW-0813">Transport</keyword>
<accession>A7UR17</accession>
<dbReference type="EMBL" id="AAAB01008582">
    <property type="protein sequence ID" value="EDO64833.1"/>
    <property type="molecule type" value="Genomic_DNA"/>
</dbReference>
<dbReference type="RefSeq" id="XP_001687816.1">
    <property type="nucleotide sequence ID" value="XM_001687764.1"/>
</dbReference>
<dbReference type="SMR" id="A7UR17"/>
<dbReference type="FunCoup" id="A7UR17">
    <property type="interactions" value="43"/>
</dbReference>
<dbReference type="STRING" id="7165.A7UR17"/>
<dbReference type="PaxDb" id="7165-AGAP012714-PA"/>
<dbReference type="EnsemblMetazoa" id="AGAP012714-RA">
    <property type="protein sequence ID" value="AGAP012714-PA"/>
    <property type="gene ID" value="AGAP012714"/>
</dbReference>
<dbReference type="VEuPathDB" id="VectorBase:AGAMI1_010293"/>
<dbReference type="VEuPathDB" id="VectorBase:AGAP012714"/>
<dbReference type="eggNOG" id="ENOG502SA47">
    <property type="taxonomic scope" value="Eukaryota"/>
</dbReference>
<dbReference type="HOGENOM" id="CLU_107288_0_0_1"/>
<dbReference type="InParanoid" id="A7UR17"/>
<dbReference type="OMA" id="HYSHLAH"/>
<dbReference type="PhylomeDB" id="A7UR17"/>
<dbReference type="Proteomes" id="UP000007062">
    <property type="component" value="Unassembled WGS sequence"/>
</dbReference>
<dbReference type="GO" id="GO:0005576">
    <property type="term" value="C:extracellular region"/>
    <property type="evidence" value="ECO:0000318"/>
    <property type="project" value="GO_Central"/>
</dbReference>
<dbReference type="GO" id="GO:0035275">
    <property type="term" value="F:dibutyl phthalate binding"/>
    <property type="evidence" value="ECO:0000318"/>
    <property type="project" value="GO_Central"/>
</dbReference>
<dbReference type="GO" id="GO:0005549">
    <property type="term" value="F:odorant binding"/>
    <property type="evidence" value="ECO:0007669"/>
    <property type="project" value="InterPro"/>
</dbReference>
<dbReference type="GO" id="GO:0042048">
    <property type="term" value="P:olfactory behavior"/>
    <property type="evidence" value="ECO:0000318"/>
    <property type="project" value="GO_Central"/>
</dbReference>
<dbReference type="GO" id="GO:0007608">
    <property type="term" value="P:sensory perception of smell"/>
    <property type="evidence" value="ECO:0000318"/>
    <property type="project" value="GO_Central"/>
</dbReference>
<dbReference type="CDD" id="cd23992">
    <property type="entry name" value="PBP_GOBP"/>
    <property type="match status" value="1"/>
</dbReference>
<dbReference type="FunFam" id="1.10.238.20:FF:000001">
    <property type="entry name" value="General odorant-binding protein lush"/>
    <property type="match status" value="1"/>
</dbReference>
<dbReference type="Gene3D" id="1.10.238.20">
    <property type="entry name" value="Pheromone/general odorant binding protein domain"/>
    <property type="match status" value="1"/>
</dbReference>
<dbReference type="InterPro" id="IPR006170">
    <property type="entry name" value="PBP/GOBP"/>
</dbReference>
<dbReference type="InterPro" id="IPR036728">
    <property type="entry name" value="PBP_GOBP_sf"/>
</dbReference>
<dbReference type="PANTHER" id="PTHR21364">
    <property type="entry name" value="GENERAL ODORANT-BINDING PROTEIN 19A"/>
    <property type="match status" value="1"/>
</dbReference>
<dbReference type="PANTHER" id="PTHR21364:SF2">
    <property type="entry name" value="GENERAL ODORANT-BINDING PROTEIN 19A"/>
    <property type="match status" value="1"/>
</dbReference>
<dbReference type="Pfam" id="PF01395">
    <property type="entry name" value="PBP_GOBP"/>
    <property type="match status" value="1"/>
</dbReference>
<dbReference type="SMART" id="SM00708">
    <property type="entry name" value="PhBP"/>
    <property type="match status" value="1"/>
</dbReference>
<dbReference type="SUPFAM" id="SSF47565">
    <property type="entry name" value="Insect pheromone/odorant-binding proteins"/>
    <property type="match status" value="1"/>
</dbReference>
<sequence length="121" mass="13656">SITQEQLEKTARTFRQVCQPKHKISDEVADAVNRGVFADTKDFKCYVSCLLDIMQVARKGKVNYEKSLKQIDTMLPDHMKPAFRAGLEACKSAAQGVKDHCEAAAILLQCFYKNNPKFVFP</sequence>
<organism>
    <name type="scientific">Anopheles gambiae</name>
    <name type="common">African malaria mosquito</name>
    <dbReference type="NCBI Taxonomy" id="7165"/>
    <lineage>
        <taxon>Eukaryota</taxon>
        <taxon>Metazoa</taxon>
        <taxon>Ecdysozoa</taxon>
        <taxon>Arthropoda</taxon>
        <taxon>Hexapoda</taxon>
        <taxon>Insecta</taxon>
        <taxon>Pterygota</taxon>
        <taxon>Neoptera</taxon>
        <taxon>Endopterygota</taxon>
        <taxon>Diptera</taxon>
        <taxon>Nematocera</taxon>
        <taxon>Culicoidea</taxon>
        <taxon>Culicidae</taxon>
        <taxon>Anophelinae</taxon>
        <taxon>Anopheles</taxon>
    </lineage>
</organism>
<evidence type="ECO:0000250" key="1"/>
<evidence type="ECO:0000305" key="2"/>
<name>OBP72_ANOGA</name>
<feature type="chain" id="PRO_0000430412" description="General odorant-binding protein 72">
    <location>
        <begin position="1" status="less than"/>
        <end position="121"/>
    </location>
</feature>
<feature type="disulfide bond" evidence="1">
    <location>
        <begin position="45"/>
        <end position="101"/>
    </location>
</feature>
<feature type="disulfide bond" evidence="1">
    <location>
        <begin position="90"/>
        <end position="110"/>
    </location>
</feature>
<feature type="non-terminal residue">
    <location>
        <position position="1"/>
    </location>
</feature>